<organism>
    <name type="scientific">Bacillus anthracis (strain CDC 684 / NRRL 3495)</name>
    <dbReference type="NCBI Taxonomy" id="568206"/>
    <lineage>
        <taxon>Bacteria</taxon>
        <taxon>Bacillati</taxon>
        <taxon>Bacillota</taxon>
        <taxon>Bacilli</taxon>
        <taxon>Bacillales</taxon>
        <taxon>Bacillaceae</taxon>
        <taxon>Bacillus</taxon>
        <taxon>Bacillus cereus group</taxon>
    </lineage>
</organism>
<sequence>MEYKTPFIAKKLGVSPKAVVRIAQQLNLTIEKNKYGHFIFTQDDLDQMLEYHRSQIEQSQNTHPTQKTSSNDVEELKTQVNTIVQNISSHDFEQLAAQLNTITRRLDRMEEQMQDKANDVVTYQLLQHRREMEEMLERIQKLEAGLKKEEPIYITPDTKPTYEREKKPKRRKMIFSIFGL</sequence>
<comment type="function">
    <text evidence="1">Required for the formation of axial filaments and for anchoring the origin regions at the cell poles in sporulating cells, thus ensuring proper chromosome segregation in the prespore. Binds in a dispersed manner throughout the chromosome but preferentially to sites clustered in the origin portion of the chromosome, causing condensation of the chromosome and its remodeling into an elongated, anchored structure.</text>
</comment>
<comment type="subcellular location">
    <subcellularLocation>
        <location evidence="1">Cytoplasm</location>
    </subcellularLocation>
    <text evidence="1">Localizes to cell poles and nucleoid.</text>
</comment>
<comment type="similarity">
    <text evidence="1">Belongs to the RacA family.</text>
</comment>
<gene>
    <name evidence="1" type="primary">racA</name>
    <name type="ordered locus">BAMEG_2307</name>
</gene>
<keyword id="KW-0131">Cell cycle</keyword>
<keyword id="KW-0132">Cell division</keyword>
<keyword id="KW-0159">Chromosome partition</keyword>
<keyword id="KW-0175">Coiled coil</keyword>
<keyword id="KW-0963">Cytoplasm</keyword>
<keyword id="KW-0238">DNA-binding</keyword>
<keyword id="KW-0749">Sporulation</keyword>
<accession>C3LJH8</accession>
<evidence type="ECO:0000255" key="1">
    <source>
        <dbReference type="HAMAP-Rule" id="MF_01170"/>
    </source>
</evidence>
<name>RACA_BACAC</name>
<protein>
    <recommendedName>
        <fullName evidence="1">Chromosome-anchoring protein RacA</fullName>
    </recommendedName>
</protein>
<proteinExistence type="inferred from homology"/>
<dbReference type="EMBL" id="CP001215">
    <property type="protein sequence ID" value="ACP14047.1"/>
    <property type="molecule type" value="Genomic_DNA"/>
</dbReference>
<dbReference type="RefSeq" id="WP_000456010.1">
    <property type="nucleotide sequence ID" value="NC_012581.1"/>
</dbReference>
<dbReference type="SMR" id="C3LJH8"/>
<dbReference type="GeneID" id="45022176"/>
<dbReference type="KEGG" id="bah:BAMEG_2307"/>
<dbReference type="HOGENOM" id="CLU_111022_0_0_9"/>
<dbReference type="GO" id="GO:0005737">
    <property type="term" value="C:cytoplasm"/>
    <property type="evidence" value="ECO:0007669"/>
    <property type="project" value="UniProtKB-SubCell"/>
</dbReference>
<dbReference type="GO" id="GO:0003690">
    <property type="term" value="F:double-stranded DNA binding"/>
    <property type="evidence" value="ECO:0007669"/>
    <property type="project" value="UniProtKB-UniRule"/>
</dbReference>
<dbReference type="GO" id="GO:0008356">
    <property type="term" value="P:asymmetric cell division"/>
    <property type="evidence" value="ECO:0007669"/>
    <property type="project" value="UniProtKB-UniRule"/>
</dbReference>
<dbReference type="GO" id="GO:0030261">
    <property type="term" value="P:chromosome condensation"/>
    <property type="evidence" value="ECO:0007669"/>
    <property type="project" value="UniProtKB-UniRule"/>
</dbReference>
<dbReference type="GO" id="GO:0007059">
    <property type="term" value="P:chromosome segregation"/>
    <property type="evidence" value="ECO:0007669"/>
    <property type="project" value="UniProtKB-UniRule"/>
</dbReference>
<dbReference type="GO" id="GO:0030435">
    <property type="term" value="P:sporulation resulting in formation of a cellular spore"/>
    <property type="evidence" value="ECO:0007669"/>
    <property type="project" value="UniProtKB-UniRule"/>
</dbReference>
<dbReference type="Gene3D" id="1.10.1660.10">
    <property type="match status" value="1"/>
</dbReference>
<dbReference type="HAMAP" id="MF_01170">
    <property type="entry name" value="RacA"/>
    <property type="match status" value="1"/>
</dbReference>
<dbReference type="InterPro" id="IPR023522">
    <property type="entry name" value="Chrosome_anchoring_RacA"/>
</dbReference>
<dbReference type="NCBIfam" id="NF009646">
    <property type="entry name" value="PRK13182.1-1"/>
    <property type="match status" value="1"/>
</dbReference>
<dbReference type="SUPFAM" id="SSF58064">
    <property type="entry name" value="Influenza hemagglutinin (stalk)"/>
    <property type="match status" value="1"/>
</dbReference>
<reference key="1">
    <citation type="submission" date="2008-10" db="EMBL/GenBank/DDBJ databases">
        <title>Genome sequence of Bacillus anthracis str. CDC 684.</title>
        <authorList>
            <person name="Dodson R.J."/>
            <person name="Munk A.C."/>
            <person name="Brettin T."/>
            <person name="Bruce D."/>
            <person name="Detter C."/>
            <person name="Tapia R."/>
            <person name="Han C."/>
            <person name="Sutton G."/>
            <person name="Sims D."/>
        </authorList>
    </citation>
    <scope>NUCLEOTIDE SEQUENCE [LARGE SCALE GENOMIC DNA]</scope>
    <source>
        <strain>CDC 684 / NRRL 3495</strain>
    </source>
</reference>
<feature type="chain" id="PRO_1000164362" description="Chromosome-anchoring protein RacA">
    <location>
        <begin position="1"/>
        <end position="180"/>
    </location>
</feature>
<feature type="DNA-binding region" description="H-T-H motif" evidence="1">
    <location>
        <begin position="5"/>
        <end position="25"/>
    </location>
</feature>
<feature type="coiled-coil region" evidence="1">
    <location>
        <begin position="90"/>
        <end position="150"/>
    </location>
</feature>